<name>TYSY_SHIF8</name>
<dbReference type="EC" id="2.1.1.45" evidence="1"/>
<dbReference type="EMBL" id="CP000266">
    <property type="protein sequence ID" value="ABF04978.1"/>
    <property type="molecule type" value="Genomic_DNA"/>
</dbReference>
<dbReference type="RefSeq" id="WP_000816233.1">
    <property type="nucleotide sequence ID" value="NC_008258.1"/>
</dbReference>
<dbReference type="SMR" id="Q0T137"/>
<dbReference type="KEGG" id="sfv:SFV_2905"/>
<dbReference type="HOGENOM" id="CLU_021669_0_0_6"/>
<dbReference type="UniPathway" id="UPA00575"/>
<dbReference type="Proteomes" id="UP000000659">
    <property type="component" value="Chromosome"/>
</dbReference>
<dbReference type="GO" id="GO:0005829">
    <property type="term" value="C:cytosol"/>
    <property type="evidence" value="ECO:0007669"/>
    <property type="project" value="TreeGrafter"/>
</dbReference>
<dbReference type="GO" id="GO:0004799">
    <property type="term" value="F:thymidylate synthase activity"/>
    <property type="evidence" value="ECO:0007669"/>
    <property type="project" value="UniProtKB-UniRule"/>
</dbReference>
<dbReference type="GO" id="GO:0006231">
    <property type="term" value="P:dTMP biosynthetic process"/>
    <property type="evidence" value="ECO:0007669"/>
    <property type="project" value="UniProtKB-UniRule"/>
</dbReference>
<dbReference type="GO" id="GO:0006235">
    <property type="term" value="P:dTTP biosynthetic process"/>
    <property type="evidence" value="ECO:0007669"/>
    <property type="project" value="UniProtKB-UniRule"/>
</dbReference>
<dbReference type="GO" id="GO:0032259">
    <property type="term" value="P:methylation"/>
    <property type="evidence" value="ECO:0007669"/>
    <property type="project" value="UniProtKB-KW"/>
</dbReference>
<dbReference type="CDD" id="cd00351">
    <property type="entry name" value="TS_Pyrimidine_HMase"/>
    <property type="match status" value="1"/>
</dbReference>
<dbReference type="FunFam" id="3.30.572.10:FF:000001">
    <property type="entry name" value="Thymidylate synthase"/>
    <property type="match status" value="1"/>
</dbReference>
<dbReference type="Gene3D" id="3.30.572.10">
    <property type="entry name" value="Thymidylate synthase/dCMP hydroxymethylase domain"/>
    <property type="match status" value="1"/>
</dbReference>
<dbReference type="HAMAP" id="MF_00008">
    <property type="entry name" value="Thymidy_synth_bact"/>
    <property type="match status" value="1"/>
</dbReference>
<dbReference type="InterPro" id="IPR045097">
    <property type="entry name" value="Thymidate_synth/dCMP_Mease"/>
</dbReference>
<dbReference type="InterPro" id="IPR023451">
    <property type="entry name" value="Thymidate_synth/dCMP_Mease_dom"/>
</dbReference>
<dbReference type="InterPro" id="IPR036926">
    <property type="entry name" value="Thymidate_synth/dCMP_Mease_sf"/>
</dbReference>
<dbReference type="InterPro" id="IPR000398">
    <property type="entry name" value="Thymidylate_synthase"/>
</dbReference>
<dbReference type="InterPro" id="IPR020940">
    <property type="entry name" value="Thymidylate_synthase_AS"/>
</dbReference>
<dbReference type="NCBIfam" id="NF002497">
    <property type="entry name" value="PRK01827.1-3"/>
    <property type="match status" value="1"/>
</dbReference>
<dbReference type="NCBIfam" id="NF002499">
    <property type="entry name" value="PRK01827.1-5"/>
    <property type="match status" value="1"/>
</dbReference>
<dbReference type="NCBIfam" id="TIGR03284">
    <property type="entry name" value="thym_sym"/>
    <property type="match status" value="2"/>
</dbReference>
<dbReference type="PANTHER" id="PTHR11548:SF9">
    <property type="entry name" value="THYMIDYLATE SYNTHASE"/>
    <property type="match status" value="1"/>
</dbReference>
<dbReference type="PANTHER" id="PTHR11548">
    <property type="entry name" value="THYMIDYLATE SYNTHASE 1"/>
    <property type="match status" value="1"/>
</dbReference>
<dbReference type="Pfam" id="PF00303">
    <property type="entry name" value="Thymidylat_synt"/>
    <property type="match status" value="1"/>
</dbReference>
<dbReference type="PRINTS" id="PR00108">
    <property type="entry name" value="THYMDSNTHASE"/>
</dbReference>
<dbReference type="SUPFAM" id="SSF55831">
    <property type="entry name" value="Thymidylate synthase/dCMP hydroxymethylase"/>
    <property type="match status" value="1"/>
</dbReference>
<dbReference type="PROSITE" id="PS00091">
    <property type="entry name" value="THYMIDYLATE_SYNTHASE"/>
    <property type="match status" value="1"/>
</dbReference>
<evidence type="ECO:0000255" key="1">
    <source>
        <dbReference type="HAMAP-Rule" id="MF_00008"/>
    </source>
</evidence>
<accession>Q0T137</accession>
<comment type="function">
    <text evidence="1">Catalyzes the reductive methylation of 2'-deoxyuridine-5'-monophosphate (dUMP) to 2'-deoxythymidine-5'-monophosphate (dTMP) while utilizing 5,10-methylenetetrahydrofolate (mTHF) as the methyl donor and reductant in the reaction, yielding dihydrofolate (DHF) as a by-product. This enzymatic reaction provides an intracellular de novo source of dTMP, an essential precursor for DNA biosynthesis.</text>
</comment>
<comment type="catalytic activity">
    <reaction evidence="1">
        <text>dUMP + (6R)-5,10-methylene-5,6,7,8-tetrahydrofolate = 7,8-dihydrofolate + dTMP</text>
        <dbReference type="Rhea" id="RHEA:12104"/>
        <dbReference type="ChEBI" id="CHEBI:15636"/>
        <dbReference type="ChEBI" id="CHEBI:57451"/>
        <dbReference type="ChEBI" id="CHEBI:63528"/>
        <dbReference type="ChEBI" id="CHEBI:246422"/>
        <dbReference type="EC" id="2.1.1.45"/>
    </reaction>
</comment>
<comment type="pathway">
    <text evidence="1">Pyrimidine metabolism; dTTP biosynthesis.</text>
</comment>
<comment type="subunit">
    <text evidence="1">Homodimer.</text>
</comment>
<comment type="subcellular location">
    <subcellularLocation>
        <location evidence="1">Cytoplasm</location>
    </subcellularLocation>
</comment>
<comment type="similarity">
    <text evidence="1">Belongs to the thymidylate synthase family. Bacterial-type ThyA subfamily.</text>
</comment>
<sequence length="264" mass="30466">MKQYLELMQKVLDEGTQKNDRTGTGTLSIFGHQMRFNLQDGFPLVTTKRCHLRSIIHELLWFLQGDTNIAYLHENNVTIWDEWADENGDLGPVYGKQWRAWPTPDGRHIDQITTVLNQLKNDPDSRRIIVSAWNVGELDKMALAPCHAFFQFYVADGKLSCQLYQRSCDVFLGLPFNIASYALLVHMMAQQCDLEVGDFVWTGGDTHLYSNHMDQTHLQLSREPRPLPKLIIKRKPESIFDYRFEDFEIEGYDPHPGVKAPVAI</sequence>
<organism>
    <name type="scientific">Shigella flexneri serotype 5b (strain 8401)</name>
    <dbReference type="NCBI Taxonomy" id="373384"/>
    <lineage>
        <taxon>Bacteria</taxon>
        <taxon>Pseudomonadati</taxon>
        <taxon>Pseudomonadota</taxon>
        <taxon>Gammaproteobacteria</taxon>
        <taxon>Enterobacterales</taxon>
        <taxon>Enterobacteriaceae</taxon>
        <taxon>Shigella</taxon>
    </lineage>
</organism>
<reference key="1">
    <citation type="journal article" date="2006" name="BMC Genomics">
        <title>Complete genome sequence of Shigella flexneri 5b and comparison with Shigella flexneri 2a.</title>
        <authorList>
            <person name="Nie H."/>
            <person name="Yang F."/>
            <person name="Zhang X."/>
            <person name="Yang J."/>
            <person name="Chen L."/>
            <person name="Wang J."/>
            <person name="Xiong Z."/>
            <person name="Peng J."/>
            <person name="Sun L."/>
            <person name="Dong J."/>
            <person name="Xue Y."/>
            <person name="Xu X."/>
            <person name="Chen S."/>
            <person name="Yao Z."/>
            <person name="Shen Y."/>
            <person name="Jin Q."/>
        </authorList>
    </citation>
    <scope>NUCLEOTIDE SEQUENCE [LARGE SCALE GENOMIC DNA]</scope>
    <source>
        <strain>8401</strain>
    </source>
</reference>
<gene>
    <name evidence="1" type="primary">thyA</name>
    <name type="ordered locus">SFV_2905</name>
</gene>
<proteinExistence type="inferred from homology"/>
<feature type="chain" id="PRO_1000000680" description="Thymidylate synthase">
    <location>
        <begin position="1"/>
        <end position="264"/>
    </location>
</feature>
<feature type="active site" description="Nucleophile" evidence="1">
    <location>
        <position position="146"/>
    </location>
</feature>
<feature type="binding site" description="in other chain" evidence="1">
    <location>
        <position position="21"/>
    </location>
    <ligand>
        <name>dUMP</name>
        <dbReference type="ChEBI" id="CHEBI:246422"/>
        <note>ligand shared between dimeric partners</note>
    </ligand>
</feature>
<feature type="binding site" evidence="1">
    <location>
        <position position="51"/>
    </location>
    <ligand>
        <name>(6R)-5,10-methylene-5,6,7,8-tetrahydrofolate</name>
        <dbReference type="ChEBI" id="CHEBI:15636"/>
    </ligand>
</feature>
<feature type="binding site" evidence="1">
    <location>
        <begin position="126"/>
        <end position="127"/>
    </location>
    <ligand>
        <name>dUMP</name>
        <dbReference type="ChEBI" id="CHEBI:246422"/>
        <note>ligand shared between dimeric partners</note>
    </ligand>
</feature>
<feature type="binding site" description="in other chain" evidence="1">
    <location>
        <begin position="166"/>
        <end position="169"/>
    </location>
    <ligand>
        <name>dUMP</name>
        <dbReference type="ChEBI" id="CHEBI:246422"/>
        <note>ligand shared between dimeric partners</note>
    </ligand>
</feature>
<feature type="binding site" evidence="1">
    <location>
        <position position="169"/>
    </location>
    <ligand>
        <name>(6R)-5,10-methylene-5,6,7,8-tetrahydrofolate</name>
        <dbReference type="ChEBI" id="CHEBI:15636"/>
    </ligand>
</feature>
<feature type="binding site" description="in other chain" evidence="1">
    <location>
        <position position="177"/>
    </location>
    <ligand>
        <name>dUMP</name>
        <dbReference type="ChEBI" id="CHEBI:246422"/>
        <note>ligand shared between dimeric partners</note>
    </ligand>
</feature>
<feature type="binding site" description="in other chain" evidence="1">
    <location>
        <begin position="207"/>
        <end position="209"/>
    </location>
    <ligand>
        <name>dUMP</name>
        <dbReference type="ChEBI" id="CHEBI:246422"/>
        <note>ligand shared between dimeric partners</note>
    </ligand>
</feature>
<feature type="binding site" evidence="1">
    <location>
        <position position="263"/>
    </location>
    <ligand>
        <name>(6R)-5,10-methylene-5,6,7,8-tetrahydrofolate</name>
        <dbReference type="ChEBI" id="CHEBI:15636"/>
    </ligand>
</feature>
<protein>
    <recommendedName>
        <fullName evidence="1">Thymidylate synthase</fullName>
        <shortName evidence="1">TS</shortName>
        <shortName evidence="1">TSase</shortName>
        <ecNumber evidence="1">2.1.1.45</ecNumber>
    </recommendedName>
</protein>
<keyword id="KW-0963">Cytoplasm</keyword>
<keyword id="KW-0489">Methyltransferase</keyword>
<keyword id="KW-0545">Nucleotide biosynthesis</keyword>
<keyword id="KW-0808">Transferase</keyword>